<organismHost>
    <name type="scientific">Homo sapiens</name>
    <name type="common">Human</name>
    <dbReference type="NCBI Taxonomy" id="9606"/>
</organismHost>
<evidence type="ECO:0000255" key="1">
    <source>
        <dbReference type="HAMAP-Rule" id="MF_04002"/>
    </source>
</evidence>
<evidence type="ECO:0000256" key="2">
    <source>
        <dbReference type="SAM" id="MobiDB-lite"/>
    </source>
</evidence>
<proteinExistence type="inferred from homology"/>
<comment type="function">
    <text evidence="1">Forms an icosahedral capsid with a T=7 symmetry and a 50 nm diameter. The capsid is composed of 72 pentamers linked to each other by disulfide bonds and associated with L2 proteins. Binds to heparan sulfate proteoglycans on cell surface of basal layer keratinocytes to provide initial virion attachment. This binding mediates a conformational change in the virus capsid that facilitates efficient infection. The virion enters the host cell via endocytosis. During virus trafficking, L1 protein dissociates from the viral DNA and the genomic DNA is released to the host nucleus. The virion assembly takes place within the cell nucleus. Encapsulates the genomic DNA together with protein L2.</text>
</comment>
<comment type="subunit">
    <text evidence="1">Self-assembles into homopentamers. The capsid has an icosahedral symmetry and consists of 72 capsomers, with each capsomer being a pentamer of L1. Interacts with the minor capsid protein L2; this interaction is necessary for viral genome encapsidation. Interacts with protein E2; this interaction enhances E2-dependent replication and transcription activation.</text>
</comment>
<comment type="subcellular location">
    <subcellularLocation>
        <location evidence="1">Virion</location>
    </subcellularLocation>
    <subcellularLocation>
        <location evidence="1">Host nucleus</location>
    </subcellularLocation>
</comment>
<comment type="similarity">
    <text evidence="1">Belongs to the papillomaviridae L1 protein family.</text>
</comment>
<sequence length="505" mass="56604">MAMWRSSDSMVYLPPPSVAKVVNTDDYVTRTGIYYYAGSSRLLTVGHPYFKVGMNGGRKQDIPKVSAYQYRVFRVTLPDPNKFSIPDASLYNPETQRLVWACVGVEVGRGQPLGVGISGHPLYNRQDDTENSPFSSTTNKDSRDNVSVDYKQTQLCIIGCVPAIGEHWGKGKACKPNNVSTGDCPPLELVNTPIEDGDMIDTGYGAMDFGALQETKSEVPLDICQSICKYPDYLQMSADVYGDSMFFCLRREQLFARHFWNRGGMVGDAIPAQLYIKGTDIRANPGSSVYCPSPSGSMVTSDSQLFNKPYWLHKAQGHNNGICWHNQLFLTVVDTTRSTNFTLSTSIESSIPSTYDPSKFKEYTRHVEEYDLQFIFQLCTVTLTTDVMSYIHTMNSSILDNWNFAVAPPPSASLVDTYRYLQSAAITCQKDAPAPEKKDPYDGLKFWNVDLREKFSLELDQFPLGRKFLLQARVRRRPTIGPRKRPAASTSSSSATKHKRKRVSK</sequence>
<gene>
    <name evidence="1" type="primary">L1</name>
</gene>
<keyword id="KW-0167">Capsid protein</keyword>
<keyword id="KW-1015">Disulfide bond</keyword>
<keyword id="KW-1048">Host nucleus</keyword>
<keyword id="KW-0945">Host-virus interaction</keyword>
<keyword id="KW-0426">Late protein</keyword>
<keyword id="KW-1185">Reference proteome</keyword>
<keyword id="KW-1145">T=7 icosahedral capsid protein</keyword>
<keyword id="KW-1161">Viral attachment to host cell</keyword>
<keyword id="KW-1162">Viral penetration into host cytoplasm</keyword>
<keyword id="KW-0946">Virion</keyword>
<keyword id="KW-1164">Virus endocytosis by host</keyword>
<keyword id="KW-1160">Virus entry into host cell</keyword>
<protein>
    <recommendedName>
        <fullName evidence="1">Major capsid protein L1</fullName>
    </recommendedName>
</protein>
<feature type="chain" id="PRO_0000133523" description="Major capsid protein L1">
    <location>
        <begin position="1"/>
        <end position="505"/>
    </location>
</feature>
<feature type="region of interest" description="Disordered" evidence="2">
    <location>
        <begin position="118"/>
        <end position="143"/>
    </location>
</feature>
<feature type="region of interest" description="Disordered" evidence="2">
    <location>
        <begin position="475"/>
        <end position="505"/>
    </location>
</feature>
<feature type="compositionally biased region" description="Basic residues" evidence="2">
    <location>
        <begin position="475"/>
        <end position="486"/>
    </location>
</feature>
<feature type="compositionally biased region" description="Basic residues" evidence="2">
    <location>
        <begin position="496"/>
        <end position="505"/>
    </location>
</feature>
<feature type="disulfide bond" description="Interchain (with C-428)" evidence="1">
    <location>
        <position position="174"/>
    </location>
</feature>
<feature type="disulfide bond" description="Interchain (with C-174)" evidence="1">
    <location>
        <position position="428"/>
    </location>
</feature>
<accession>P24838</accession>
<dbReference type="EMBL" id="M62849">
    <property type="protein sequence ID" value="AAA47056.1"/>
    <property type="molecule type" value="Genomic_DNA"/>
</dbReference>
<dbReference type="PIR" id="H38502">
    <property type="entry name" value="P1WL39"/>
</dbReference>
<dbReference type="SMR" id="P24838"/>
<dbReference type="Proteomes" id="UP000009120">
    <property type="component" value="Genome"/>
</dbReference>
<dbReference type="GO" id="GO:0042025">
    <property type="term" value="C:host cell nucleus"/>
    <property type="evidence" value="ECO:0007669"/>
    <property type="project" value="UniProtKB-SubCell"/>
</dbReference>
<dbReference type="GO" id="GO:0039620">
    <property type="term" value="C:T=7 icosahedral viral capsid"/>
    <property type="evidence" value="ECO:0007669"/>
    <property type="project" value="UniProtKB-UniRule"/>
</dbReference>
<dbReference type="GO" id="GO:0005198">
    <property type="term" value="F:structural molecule activity"/>
    <property type="evidence" value="ECO:0007669"/>
    <property type="project" value="UniProtKB-UniRule"/>
</dbReference>
<dbReference type="GO" id="GO:0075509">
    <property type="term" value="P:endocytosis involved in viral entry into host cell"/>
    <property type="evidence" value="ECO:0007669"/>
    <property type="project" value="UniProtKB-KW"/>
</dbReference>
<dbReference type="GO" id="GO:0019062">
    <property type="term" value="P:virion attachment to host cell"/>
    <property type="evidence" value="ECO:0007669"/>
    <property type="project" value="UniProtKB-UniRule"/>
</dbReference>
<dbReference type="Gene3D" id="2.60.175.20">
    <property type="entry name" value="Major capsid L1 (late) superfamily, Papillomavirus"/>
    <property type="match status" value="2"/>
</dbReference>
<dbReference type="HAMAP" id="MF_04002">
    <property type="entry name" value="PPV_L1"/>
    <property type="match status" value="1"/>
</dbReference>
<dbReference type="InterPro" id="IPR002210">
    <property type="entry name" value="Capsid_L1_Papillomavir"/>
</dbReference>
<dbReference type="InterPro" id="IPR036973">
    <property type="entry name" value="Capsid_L1_sf_Papillomavir"/>
</dbReference>
<dbReference type="InterPro" id="IPR011222">
    <property type="entry name" value="dsDNA_vir_gr_I_capsid"/>
</dbReference>
<dbReference type="Pfam" id="PF00500">
    <property type="entry name" value="Late_protein_L1"/>
    <property type="match status" value="1"/>
</dbReference>
<dbReference type="PRINTS" id="PR00865">
    <property type="entry name" value="HPVCAPSIDL1"/>
</dbReference>
<dbReference type="SUPFAM" id="SSF88648">
    <property type="entry name" value="Group I dsDNA viruses"/>
    <property type="match status" value="1"/>
</dbReference>
<organism>
    <name type="scientific">Human papillomavirus 39</name>
    <dbReference type="NCBI Taxonomy" id="10588"/>
    <lineage>
        <taxon>Viruses</taxon>
        <taxon>Monodnaviria</taxon>
        <taxon>Shotokuvirae</taxon>
        <taxon>Cossaviricota</taxon>
        <taxon>Papovaviricetes</taxon>
        <taxon>Zurhausenvirales</taxon>
        <taxon>Papillomaviridae</taxon>
        <taxon>Firstpapillomavirinae</taxon>
        <taxon>Alphapapillomavirus</taxon>
        <taxon>Alphapapillomavirus 7</taxon>
    </lineage>
</organism>
<reference key="1">
    <citation type="journal article" date="1991" name="Virology">
        <title>Genome organization and nucleotide sequence of human papillomavirus type 39.</title>
        <authorList>
            <person name="Volpers C."/>
            <person name="Streeck R.E."/>
        </authorList>
    </citation>
    <scope>NUCLEOTIDE SEQUENCE [GENOMIC DNA]</scope>
</reference>
<name>VL1_HPV39</name>